<proteinExistence type="inferred from homology"/>
<protein>
    <recommendedName>
        <fullName evidence="1">Small ribosomal subunit protein uS14m</fullName>
    </recommendedName>
    <alternativeName>
        <fullName>Ribosomal protein S14, mitochondrial</fullName>
    </alternativeName>
</protein>
<dbReference type="EMBL" id="U02970">
    <property type="protein sequence ID" value="AAD12639.1"/>
    <property type="molecule type" value="Genomic_DNA"/>
</dbReference>
<dbReference type="PIR" id="T11920">
    <property type="entry name" value="T11920"/>
</dbReference>
<dbReference type="RefSeq" id="NP_042251.1">
    <property type="nucleotide sequence ID" value="NC_001613.1"/>
</dbReference>
<dbReference type="SMR" id="P46752"/>
<dbReference type="GeneID" id="802125"/>
<dbReference type="GO" id="GO:0005739">
    <property type="term" value="C:mitochondrion"/>
    <property type="evidence" value="ECO:0007669"/>
    <property type="project" value="UniProtKB-SubCell"/>
</dbReference>
<dbReference type="GO" id="GO:0015935">
    <property type="term" value="C:small ribosomal subunit"/>
    <property type="evidence" value="ECO:0007669"/>
    <property type="project" value="TreeGrafter"/>
</dbReference>
<dbReference type="GO" id="GO:0003735">
    <property type="term" value="F:structural constituent of ribosome"/>
    <property type="evidence" value="ECO:0007669"/>
    <property type="project" value="InterPro"/>
</dbReference>
<dbReference type="GO" id="GO:0006412">
    <property type="term" value="P:translation"/>
    <property type="evidence" value="ECO:0007669"/>
    <property type="project" value="InterPro"/>
</dbReference>
<dbReference type="FunFam" id="1.10.287.1480:FF:000001">
    <property type="entry name" value="30S ribosomal protein S14"/>
    <property type="match status" value="1"/>
</dbReference>
<dbReference type="Gene3D" id="1.10.287.1480">
    <property type="match status" value="1"/>
</dbReference>
<dbReference type="InterPro" id="IPR001209">
    <property type="entry name" value="Ribosomal_uS14"/>
</dbReference>
<dbReference type="NCBIfam" id="NF006477">
    <property type="entry name" value="PRK08881.1"/>
    <property type="match status" value="1"/>
</dbReference>
<dbReference type="PANTHER" id="PTHR19836">
    <property type="entry name" value="30S RIBOSOMAL PROTEIN S14"/>
    <property type="match status" value="1"/>
</dbReference>
<dbReference type="PANTHER" id="PTHR19836:SF19">
    <property type="entry name" value="SMALL RIBOSOMAL SUBUNIT PROTEIN US14M"/>
    <property type="match status" value="1"/>
</dbReference>
<dbReference type="Pfam" id="PF00253">
    <property type="entry name" value="Ribosomal_S14"/>
    <property type="match status" value="1"/>
</dbReference>
<dbReference type="SUPFAM" id="SSF57716">
    <property type="entry name" value="Glucocorticoid receptor-like (DNA-binding domain)"/>
    <property type="match status" value="1"/>
</dbReference>
<feature type="chain" id="PRO_0000131007" description="Small ribosomal subunit protein uS14m">
    <location>
        <begin position="1"/>
        <end position="99"/>
    </location>
</feature>
<keyword id="KW-0496">Mitochondrion</keyword>
<keyword id="KW-0687">Ribonucleoprotein</keyword>
<keyword id="KW-0689">Ribosomal protein</keyword>
<accession>P46752</accession>
<organism>
    <name type="scientific">Prototheca wickerhamii</name>
    <dbReference type="NCBI Taxonomy" id="3111"/>
    <lineage>
        <taxon>Eukaryota</taxon>
        <taxon>Viridiplantae</taxon>
        <taxon>Chlorophyta</taxon>
        <taxon>core chlorophytes</taxon>
        <taxon>Trebouxiophyceae</taxon>
        <taxon>Chlorellales</taxon>
        <taxon>Chlorellaceae</taxon>
        <taxon>Prototheca</taxon>
    </lineage>
</organism>
<comment type="subcellular location">
    <subcellularLocation>
        <location>Mitochondrion</location>
    </subcellularLocation>
</comment>
<comment type="similarity">
    <text evidence="1">Belongs to the universal ribosomal protein uS14 family.</text>
</comment>
<sequence>MFNSIKRDLKRRKLYKKYESKRLLYKALISDCNLNQDLRFILTQKLNKLPRNSSQVRVKNRCILTGRGHSVYKFCRISRIKFRDLANQGLIQGCVKSSW</sequence>
<gene>
    <name type="primary">RPS14</name>
</gene>
<geneLocation type="mitochondrion"/>
<reference key="1">
    <citation type="journal article" date="1994" name="J. Mol. Biol.">
        <title>Complete sequence of the mitochondrial DNA of the chlorophyte alga Prototheca wickerhamii. Gene content and genome organization.</title>
        <authorList>
            <person name="Wolff G."/>
            <person name="Plante I."/>
            <person name="Lang B.F."/>
            <person name="Kueck U."/>
            <person name="Burger G."/>
        </authorList>
    </citation>
    <scope>NUCLEOTIDE SEQUENCE [GENOMIC DNA]</scope>
    <source>
        <strain>263-11</strain>
    </source>
</reference>
<name>RT14_PROWI</name>
<evidence type="ECO:0000305" key="1"/>